<feature type="chain" id="PRO_0000126382" description="Small ribosomal subunit protein uS8">
    <location>
        <begin position="1"/>
        <end position="130"/>
    </location>
</feature>
<organism>
    <name type="scientific">Buchnera aphidicola subsp. Schizaphis graminum (strain Sg)</name>
    <dbReference type="NCBI Taxonomy" id="198804"/>
    <lineage>
        <taxon>Bacteria</taxon>
        <taxon>Pseudomonadati</taxon>
        <taxon>Pseudomonadota</taxon>
        <taxon>Gammaproteobacteria</taxon>
        <taxon>Enterobacterales</taxon>
        <taxon>Erwiniaceae</taxon>
        <taxon>Buchnera</taxon>
    </lineage>
</organism>
<proteinExistence type="inferred from homology"/>
<protein>
    <recommendedName>
        <fullName evidence="1">Small ribosomal subunit protein uS8</fullName>
    </recommendedName>
    <alternativeName>
        <fullName evidence="2">30S ribosomal protein S8</fullName>
    </alternativeName>
</protein>
<sequence>MSMQDPVADMLTRIRNGQSANKYSVKMPCSKLKYSIIELLKKEGYIKNFNIQGNNKLKIEVILKYFKGKSVIETIQRVSRPSLRIYKKKNNLPTVMAGLGIAIISTSQGIMTDRKARRLGLGGEVICYVA</sequence>
<name>RS8_BUCAP</name>
<accession>P59030</accession>
<evidence type="ECO:0000255" key="1">
    <source>
        <dbReference type="HAMAP-Rule" id="MF_01302"/>
    </source>
</evidence>
<evidence type="ECO:0000305" key="2"/>
<dbReference type="EMBL" id="AE013218">
    <property type="protein sequence ID" value="AAM68034.1"/>
    <property type="molecule type" value="Genomic_DNA"/>
</dbReference>
<dbReference type="RefSeq" id="WP_011054000.1">
    <property type="nucleotide sequence ID" value="NC_004061.1"/>
</dbReference>
<dbReference type="SMR" id="P59030"/>
<dbReference type="STRING" id="198804.BUsg_491"/>
<dbReference type="GeneID" id="93003966"/>
<dbReference type="KEGG" id="bas:BUsg_491"/>
<dbReference type="eggNOG" id="COG0096">
    <property type="taxonomic scope" value="Bacteria"/>
</dbReference>
<dbReference type="HOGENOM" id="CLU_098428_0_0_6"/>
<dbReference type="Proteomes" id="UP000000416">
    <property type="component" value="Chromosome"/>
</dbReference>
<dbReference type="GO" id="GO:1990904">
    <property type="term" value="C:ribonucleoprotein complex"/>
    <property type="evidence" value="ECO:0007669"/>
    <property type="project" value="UniProtKB-KW"/>
</dbReference>
<dbReference type="GO" id="GO:0005840">
    <property type="term" value="C:ribosome"/>
    <property type="evidence" value="ECO:0007669"/>
    <property type="project" value="UniProtKB-KW"/>
</dbReference>
<dbReference type="GO" id="GO:0019843">
    <property type="term" value="F:rRNA binding"/>
    <property type="evidence" value="ECO:0007669"/>
    <property type="project" value="UniProtKB-UniRule"/>
</dbReference>
<dbReference type="GO" id="GO:0003735">
    <property type="term" value="F:structural constituent of ribosome"/>
    <property type="evidence" value="ECO:0007669"/>
    <property type="project" value="InterPro"/>
</dbReference>
<dbReference type="GO" id="GO:0006412">
    <property type="term" value="P:translation"/>
    <property type="evidence" value="ECO:0007669"/>
    <property type="project" value="UniProtKB-UniRule"/>
</dbReference>
<dbReference type="FunFam" id="3.30.1370.30:FF:000002">
    <property type="entry name" value="30S ribosomal protein S8"/>
    <property type="match status" value="1"/>
</dbReference>
<dbReference type="FunFam" id="3.30.1490.10:FF:000001">
    <property type="entry name" value="30S ribosomal protein S8"/>
    <property type="match status" value="1"/>
</dbReference>
<dbReference type="Gene3D" id="3.30.1370.30">
    <property type="match status" value="1"/>
</dbReference>
<dbReference type="Gene3D" id="3.30.1490.10">
    <property type="match status" value="1"/>
</dbReference>
<dbReference type="HAMAP" id="MF_01302_B">
    <property type="entry name" value="Ribosomal_uS8_B"/>
    <property type="match status" value="1"/>
</dbReference>
<dbReference type="InterPro" id="IPR000630">
    <property type="entry name" value="Ribosomal_uS8"/>
</dbReference>
<dbReference type="InterPro" id="IPR047863">
    <property type="entry name" value="Ribosomal_uS8_CS"/>
</dbReference>
<dbReference type="InterPro" id="IPR035987">
    <property type="entry name" value="Ribosomal_uS8_sf"/>
</dbReference>
<dbReference type="NCBIfam" id="NF001109">
    <property type="entry name" value="PRK00136.1"/>
    <property type="match status" value="1"/>
</dbReference>
<dbReference type="PANTHER" id="PTHR11758">
    <property type="entry name" value="40S RIBOSOMAL PROTEIN S15A"/>
    <property type="match status" value="1"/>
</dbReference>
<dbReference type="Pfam" id="PF00410">
    <property type="entry name" value="Ribosomal_S8"/>
    <property type="match status" value="1"/>
</dbReference>
<dbReference type="SUPFAM" id="SSF56047">
    <property type="entry name" value="Ribosomal protein S8"/>
    <property type="match status" value="1"/>
</dbReference>
<dbReference type="PROSITE" id="PS00053">
    <property type="entry name" value="RIBOSOMAL_S8"/>
    <property type="match status" value="1"/>
</dbReference>
<comment type="function">
    <text evidence="1">One of the primary rRNA binding proteins, it binds directly to 16S rRNA central domain where it helps coordinate assembly of the platform of the 30S subunit.</text>
</comment>
<comment type="subunit">
    <text evidence="1">Part of the 30S ribosomal subunit. Contacts proteins S5 and S12.</text>
</comment>
<comment type="similarity">
    <text evidence="1">Belongs to the universal ribosomal protein uS8 family.</text>
</comment>
<gene>
    <name evidence="1" type="primary">rpsH</name>
    <name type="ordered locus">BUsg_491</name>
</gene>
<keyword id="KW-0687">Ribonucleoprotein</keyword>
<keyword id="KW-0689">Ribosomal protein</keyword>
<keyword id="KW-0694">RNA-binding</keyword>
<keyword id="KW-0699">rRNA-binding</keyword>
<reference key="1">
    <citation type="journal article" date="2002" name="Science">
        <title>50 million years of genomic stasis in endosymbiotic bacteria.</title>
        <authorList>
            <person name="Tamas I."/>
            <person name="Klasson L."/>
            <person name="Canbaeck B."/>
            <person name="Naeslund A.K."/>
            <person name="Eriksson A.-S."/>
            <person name="Wernegreen J.J."/>
            <person name="Sandstroem J.P."/>
            <person name="Moran N.A."/>
            <person name="Andersson S.G.E."/>
        </authorList>
    </citation>
    <scope>NUCLEOTIDE SEQUENCE [LARGE SCALE GENOMIC DNA]</scope>
    <source>
        <strain>Sg</strain>
    </source>
</reference>